<sequence length="157" mass="17928">MPRKGPVKKREILPDPVYNDKVVAKLINKVMYDGKKSIAQKIVYGAFDIIREKTGKDPLEVLEAALNNVMPVLEVRPRRVGGATYQVPIEVAPDRRLSLGIRWLVEYARERKDKRTMKEKLAAEIMDAANNTGGAVKKKEDTHRMAEANRAFAHYRW</sequence>
<evidence type="ECO:0000255" key="1">
    <source>
        <dbReference type="HAMAP-Rule" id="MF_00480"/>
    </source>
</evidence>
<evidence type="ECO:0000305" key="2"/>
<accession>B9MQG9</accession>
<proteinExistence type="inferred from homology"/>
<protein>
    <recommendedName>
        <fullName evidence="1">Small ribosomal subunit protein uS7</fullName>
    </recommendedName>
    <alternativeName>
        <fullName evidence="2">30S ribosomal protein S7</fullName>
    </alternativeName>
</protein>
<dbReference type="EMBL" id="CP001393">
    <property type="protein sequence ID" value="ACM59923.1"/>
    <property type="molecule type" value="Genomic_DNA"/>
</dbReference>
<dbReference type="RefSeq" id="WP_013290053.1">
    <property type="nucleotide sequence ID" value="NC_012034.1"/>
</dbReference>
<dbReference type="SMR" id="B9MQG9"/>
<dbReference type="STRING" id="521460.Athe_0808"/>
<dbReference type="GeneID" id="31772163"/>
<dbReference type="KEGG" id="ate:Athe_0808"/>
<dbReference type="eggNOG" id="COG0049">
    <property type="taxonomic scope" value="Bacteria"/>
</dbReference>
<dbReference type="HOGENOM" id="CLU_072226_1_1_9"/>
<dbReference type="Proteomes" id="UP000007723">
    <property type="component" value="Chromosome"/>
</dbReference>
<dbReference type="GO" id="GO:0015935">
    <property type="term" value="C:small ribosomal subunit"/>
    <property type="evidence" value="ECO:0007669"/>
    <property type="project" value="InterPro"/>
</dbReference>
<dbReference type="GO" id="GO:0019843">
    <property type="term" value="F:rRNA binding"/>
    <property type="evidence" value="ECO:0007669"/>
    <property type="project" value="UniProtKB-UniRule"/>
</dbReference>
<dbReference type="GO" id="GO:0003735">
    <property type="term" value="F:structural constituent of ribosome"/>
    <property type="evidence" value="ECO:0007669"/>
    <property type="project" value="InterPro"/>
</dbReference>
<dbReference type="GO" id="GO:0000049">
    <property type="term" value="F:tRNA binding"/>
    <property type="evidence" value="ECO:0007669"/>
    <property type="project" value="UniProtKB-UniRule"/>
</dbReference>
<dbReference type="GO" id="GO:0006412">
    <property type="term" value="P:translation"/>
    <property type="evidence" value="ECO:0007669"/>
    <property type="project" value="UniProtKB-UniRule"/>
</dbReference>
<dbReference type="CDD" id="cd14869">
    <property type="entry name" value="uS7_Bacteria"/>
    <property type="match status" value="1"/>
</dbReference>
<dbReference type="FunFam" id="1.10.455.10:FF:000001">
    <property type="entry name" value="30S ribosomal protein S7"/>
    <property type="match status" value="1"/>
</dbReference>
<dbReference type="Gene3D" id="1.10.455.10">
    <property type="entry name" value="Ribosomal protein S7 domain"/>
    <property type="match status" value="1"/>
</dbReference>
<dbReference type="HAMAP" id="MF_00480_B">
    <property type="entry name" value="Ribosomal_uS7_B"/>
    <property type="match status" value="1"/>
</dbReference>
<dbReference type="InterPro" id="IPR000235">
    <property type="entry name" value="Ribosomal_uS7"/>
</dbReference>
<dbReference type="InterPro" id="IPR005717">
    <property type="entry name" value="Ribosomal_uS7_bac/org-type"/>
</dbReference>
<dbReference type="InterPro" id="IPR020606">
    <property type="entry name" value="Ribosomal_uS7_CS"/>
</dbReference>
<dbReference type="InterPro" id="IPR023798">
    <property type="entry name" value="Ribosomal_uS7_dom"/>
</dbReference>
<dbReference type="InterPro" id="IPR036823">
    <property type="entry name" value="Ribosomal_uS7_dom_sf"/>
</dbReference>
<dbReference type="NCBIfam" id="TIGR01029">
    <property type="entry name" value="rpsG_bact"/>
    <property type="match status" value="1"/>
</dbReference>
<dbReference type="PANTHER" id="PTHR11205">
    <property type="entry name" value="RIBOSOMAL PROTEIN S7"/>
    <property type="match status" value="1"/>
</dbReference>
<dbReference type="Pfam" id="PF00177">
    <property type="entry name" value="Ribosomal_S7"/>
    <property type="match status" value="1"/>
</dbReference>
<dbReference type="PIRSF" id="PIRSF002122">
    <property type="entry name" value="RPS7p_RPS7a_RPS5e_RPS7o"/>
    <property type="match status" value="1"/>
</dbReference>
<dbReference type="SUPFAM" id="SSF47973">
    <property type="entry name" value="Ribosomal protein S7"/>
    <property type="match status" value="1"/>
</dbReference>
<dbReference type="PROSITE" id="PS00052">
    <property type="entry name" value="RIBOSOMAL_S7"/>
    <property type="match status" value="1"/>
</dbReference>
<reference key="1">
    <citation type="submission" date="2009-01" db="EMBL/GenBank/DDBJ databases">
        <title>Complete sequence of chromosome of Caldicellulosiruptor becscii DSM 6725.</title>
        <authorList>
            <person name="Lucas S."/>
            <person name="Copeland A."/>
            <person name="Lapidus A."/>
            <person name="Glavina del Rio T."/>
            <person name="Tice H."/>
            <person name="Bruce D."/>
            <person name="Goodwin L."/>
            <person name="Pitluck S."/>
            <person name="Sims D."/>
            <person name="Meincke L."/>
            <person name="Brettin T."/>
            <person name="Detter J.C."/>
            <person name="Han C."/>
            <person name="Larimer F."/>
            <person name="Land M."/>
            <person name="Hauser L."/>
            <person name="Kyrpides N."/>
            <person name="Ovchinnikova G."/>
            <person name="Kataeva I."/>
            <person name="Adams M.W.W."/>
        </authorList>
    </citation>
    <scope>NUCLEOTIDE SEQUENCE [LARGE SCALE GENOMIC DNA]</scope>
    <source>
        <strain>ATCC BAA-1888 / DSM 6725 / KCTC 15123 / Z-1320</strain>
    </source>
</reference>
<gene>
    <name evidence="1" type="primary">rpsG</name>
    <name type="ordered locus">Athe_0808</name>
</gene>
<feature type="chain" id="PRO_1000135575" description="Small ribosomal subunit protein uS7">
    <location>
        <begin position="1"/>
        <end position="157"/>
    </location>
</feature>
<name>RS7_CALBD</name>
<comment type="function">
    <text evidence="1">One of the primary rRNA binding proteins, it binds directly to 16S rRNA where it nucleates assembly of the head domain of the 30S subunit. Is located at the subunit interface close to the decoding center, probably blocks exit of the E-site tRNA.</text>
</comment>
<comment type="subunit">
    <text evidence="1">Part of the 30S ribosomal subunit. Contacts proteins S9 and S11.</text>
</comment>
<comment type="similarity">
    <text evidence="1">Belongs to the universal ribosomal protein uS7 family.</text>
</comment>
<organism>
    <name type="scientific">Caldicellulosiruptor bescii (strain ATCC BAA-1888 / DSM 6725 / KCTC 15123 / Z-1320)</name>
    <name type="common">Anaerocellum thermophilum</name>
    <dbReference type="NCBI Taxonomy" id="521460"/>
    <lineage>
        <taxon>Bacteria</taxon>
        <taxon>Bacillati</taxon>
        <taxon>Bacillota</taxon>
        <taxon>Bacillota incertae sedis</taxon>
        <taxon>Caldicellulosiruptorales</taxon>
        <taxon>Caldicellulosiruptoraceae</taxon>
        <taxon>Caldicellulosiruptor</taxon>
    </lineage>
</organism>
<keyword id="KW-0687">Ribonucleoprotein</keyword>
<keyword id="KW-0689">Ribosomal protein</keyword>
<keyword id="KW-0694">RNA-binding</keyword>
<keyword id="KW-0699">rRNA-binding</keyword>
<keyword id="KW-0820">tRNA-binding</keyword>